<protein>
    <recommendedName>
        <fullName>Rhodopsin</fullName>
    </recommendedName>
</protein>
<accession>P31355</accession>
<gene>
    <name type="primary">RHO</name>
</gene>
<organism>
    <name type="scientific">Lithobates pipiens</name>
    <name type="common">Northern leopard frog</name>
    <name type="synonym">Rana pipiens</name>
    <dbReference type="NCBI Taxonomy" id="8404"/>
    <lineage>
        <taxon>Eukaryota</taxon>
        <taxon>Metazoa</taxon>
        <taxon>Chordata</taxon>
        <taxon>Craniata</taxon>
        <taxon>Vertebrata</taxon>
        <taxon>Euteleostomi</taxon>
        <taxon>Amphibia</taxon>
        <taxon>Batrachia</taxon>
        <taxon>Anura</taxon>
        <taxon>Neobatrachia</taxon>
        <taxon>Ranoidea</taxon>
        <taxon>Ranidae</taxon>
        <taxon>Lithobates</taxon>
    </lineage>
</organism>
<sequence>MNGTEGPNFYIPMSNKTGVVRSPFDYPQYYLAEPWKYSVLAAYMFLLILLGLPINFMTLYVTIQHKKLRTPLNYILLNLGVCNHFMVLCGFTITMYTSLHGYFVFGQTGCYFEGFFATLGGEIALWSLVVLAIERYIVVCKPMSNFRFGENHAMMGVAFTWIMALACAVPPLFGWSRYIPEGMQCSCGVDYYTLKPEVNNESFVIYMFVVHFLIPLIIISFCYGRLVCTVKEAAAQQQESATTQKAEKEVTRMVIIMVIFFLICWVPYAYVAFYIFTHQGSEFGPIFMTVPAFFAKSSAIYNPVIYIMLNKQFRNCMITTLCCGKNPFGDDDASSAATSKTEATSVSTSQVSPA</sequence>
<reference key="1">
    <citation type="journal article" date="1992" name="FEBS Lett.">
        <title>Primary structure of frog rhodopsin.</title>
        <authorList>
            <person name="Pittler S.J."/>
            <person name="Fliesler S.J."/>
            <person name="Baehr W."/>
        </authorList>
    </citation>
    <scope>NUCLEOTIDE SEQUENCE [MRNA]</scope>
    <scope>TISSUE SPECIFICITY</scope>
    <source>
        <tissue>Retina</tissue>
    </source>
</reference>
<reference key="2">
    <citation type="journal article" date="1993" name="Glycobiology">
        <title>Identification and oligosaccharide structure analysis of rhodopsin glycoforms containing galactose and sialic acid.</title>
        <authorList>
            <person name="Duffin K.L."/>
            <person name="Lange G.W."/>
            <person name="Welply J.K."/>
            <person name="Florman R."/>
            <person name="O'Brien P.J."/>
            <person name="Dell A."/>
            <person name="Reason A.J."/>
            <person name="Morris H.R."/>
            <person name="Fliesler S.J."/>
        </authorList>
    </citation>
    <scope>GLYCOSYLATION AT ASN-2 AND ASN-15</scope>
    <scope>STRUCTURE OF CARBOHYDRATES</scope>
    <scope>IDENTIFICATION BY MASS SPECTROMETRY</scope>
    <scope>SUBCELLULAR LOCATION</scope>
</reference>
<evidence type="ECO:0000250" key="1">
    <source>
        <dbReference type="UniProtKB" id="P02699"/>
    </source>
</evidence>
<evidence type="ECO:0000250" key="2">
    <source>
        <dbReference type="UniProtKB" id="P08100"/>
    </source>
</evidence>
<evidence type="ECO:0000255" key="3">
    <source>
        <dbReference type="PROSITE-ProRule" id="PRU00521"/>
    </source>
</evidence>
<evidence type="ECO:0000256" key="4">
    <source>
        <dbReference type="SAM" id="MobiDB-lite"/>
    </source>
</evidence>
<evidence type="ECO:0000269" key="5">
    <source>
    </source>
</evidence>
<evidence type="ECO:0000269" key="6">
    <source>
    </source>
</evidence>
<evidence type="ECO:0000305" key="7"/>
<name>OPSD_LITPI</name>
<proteinExistence type="evidence at protein level"/>
<feature type="chain" id="PRO_0000197706" description="Rhodopsin">
    <location>
        <begin position="1"/>
        <end position="354"/>
    </location>
</feature>
<feature type="topological domain" description="Extracellular" evidence="7">
    <location>
        <begin position="1"/>
        <end position="36"/>
    </location>
</feature>
<feature type="transmembrane region" description="Helical; Name=1" evidence="1">
    <location>
        <begin position="37"/>
        <end position="61"/>
    </location>
</feature>
<feature type="topological domain" description="Cytoplasmic" evidence="7">
    <location>
        <begin position="62"/>
        <end position="73"/>
    </location>
</feature>
<feature type="transmembrane region" description="Helical; Name=2" evidence="1">
    <location>
        <begin position="74"/>
        <end position="96"/>
    </location>
</feature>
<feature type="topological domain" description="Extracellular" evidence="7">
    <location>
        <begin position="97"/>
        <end position="110"/>
    </location>
</feature>
<feature type="transmembrane region" description="Helical; Name=3" evidence="1">
    <location>
        <begin position="111"/>
        <end position="133"/>
    </location>
</feature>
<feature type="topological domain" description="Cytoplasmic" evidence="7">
    <location>
        <begin position="134"/>
        <end position="152"/>
    </location>
</feature>
<feature type="transmembrane region" description="Helical; Name=4" evidence="1">
    <location>
        <begin position="153"/>
        <end position="173"/>
    </location>
</feature>
<feature type="topological domain" description="Extracellular" evidence="7">
    <location>
        <begin position="174"/>
        <end position="202"/>
    </location>
</feature>
<feature type="transmembrane region" description="Helical; Name=5" evidence="1">
    <location>
        <begin position="203"/>
        <end position="224"/>
    </location>
</feature>
<feature type="topological domain" description="Cytoplasmic" evidence="7">
    <location>
        <begin position="225"/>
        <end position="252"/>
    </location>
</feature>
<feature type="transmembrane region" description="Helical; Name=6" evidence="1">
    <location>
        <begin position="253"/>
        <end position="274"/>
    </location>
</feature>
<feature type="topological domain" description="Extracellular" evidence="7">
    <location>
        <begin position="275"/>
        <end position="286"/>
    </location>
</feature>
<feature type="transmembrane region" description="Helical; Name=7" evidence="1">
    <location>
        <begin position="287"/>
        <end position="308"/>
    </location>
</feature>
<feature type="topological domain" description="Cytoplasmic" evidence="7">
    <location>
        <begin position="309"/>
        <end position="354"/>
    </location>
</feature>
<feature type="region of interest" description="Disordered" evidence="4">
    <location>
        <begin position="332"/>
        <end position="354"/>
    </location>
</feature>
<feature type="short sequence motif" description="'Ionic lock' involved in activated form stabilization" evidence="1">
    <location>
        <begin position="134"/>
        <end position="136"/>
    </location>
</feature>
<feature type="compositionally biased region" description="Low complexity" evidence="4">
    <location>
        <begin position="334"/>
        <end position="354"/>
    </location>
</feature>
<feature type="site" description="Plays an important role in the conformation switch to the active conformation" evidence="1">
    <location>
        <position position="113"/>
    </location>
</feature>
<feature type="modified residue" description="N6-(retinylidene)lysine" evidence="1">
    <location>
        <position position="296"/>
    </location>
</feature>
<feature type="lipid moiety-binding region" description="S-palmitoyl cysteine" evidence="1">
    <location>
        <position position="322"/>
    </location>
</feature>
<feature type="lipid moiety-binding region" description="S-palmitoyl cysteine" evidence="1">
    <location>
        <position position="323"/>
    </location>
</feature>
<feature type="glycosylation site" id="CAR_000188" description="N-linked (GlcNAc...) (hybrid) asparagine" evidence="6">
    <location>
        <position position="2"/>
    </location>
</feature>
<feature type="glycosylation site" id="CAR_000199" description="N-linked (GlcNAc...) asparagine" evidence="6">
    <location>
        <position position="15"/>
    </location>
</feature>
<feature type="disulfide bond" evidence="3">
    <location>
        <begin position="110"/>
        <end position="187"/>
    </location>
</feature>
<dbReference type="EMBL" id="S49004">
    <property type="protein sequence ID" value="AAB24265.1"/>
    <property type="molecule type" value="mRNA"/>
</dbReference>
<dbReference type="PIR" id="S27231">
    <property type="entry name" value="S27231"/>
</dbReference>
<dbReference type="SMR" id="P31355"/>
<dbReference type="GlyConnect" id="526">
    <property type="glycosylation" value="8 N-Linked glycans (2 sites)"/>
</dbReference>
<dbReference type="GlyCosmos" id="P31355">
    <property type="glycosylation" value="2 sites, 14 glycans"/>
</dbReference>
<dbReference type="GO" id="GO:0016020">
    <property type="term" value="C:membrane"/>
    <property type="evidence" value="ECO:0000250"/>
    <property type="project" value="UniProtKB"/>
</dbReference>
<dbReference type="GO" id="GO:0097381">
    <property type="term" value="C:photoreceptor disc membrane"/>
    <property type="evidence" value="ECO:0000250"/>
    <property type="project" value="UniProtKB"/>
</dbReference>
<dbReference type="GO" id="GO:0005886">
    <property type="term" value="C:plasma membrane"/>
    <property type="evidence" value="ECO:0000250"/>
    <property type="project" value="UniProtKB"/>
</dbReference>
<dbReference type="GO" id="GO:0005502">
    <property type="term" value="F:11-cis retinal binding"/>
    <property type="evidence" value="ECO:0000250"/>
    <property type="project" value="UniProtKB"/>
</dbReference>
<dbReference type="GO" id="GO:0008020">
    <property type="term" value="F:G protein-coupled photoreceptor activity"/>
    <property type="evidence" value="ECO:0000250"/>
    <property type="project" value="UniProtKB"/>
</dbReference>
<dbReference type="GO" id="GO:0016038">
    <property type="term" value="P:absorption of visible light"/>
    <property type="evidence" value="ECO:0000250"/>
    <property type="project" value="UniProtKB"/>
</dbReference>
<dbReference type="GO" id="GO:0016056">
    <property type="term" value="P:G protein-coupled opsin signaling pathway"/>
    <property type="evidence" value="ECO:0000250"/>
    <property type="project" value="UniProtKB"/>
</dbReference>
<dbReference type="GO" id="GO:0007601">
    <property type="term" value="P:visual perception"/>
    <property type="evidence" value="ECO:0007669"/>
    <property type="project" value="UniProtKB-KW"/>
</dbReference>
<dbReference type="CDD" id="cd15080">
    <property type="entry name" value="7tmA_MWS_opsin"/>
    <property type="match status" value="1"/>
</dbReference>
<dbReference type="FunFam" id="1.20.1070.10:FF:000018">
    <property type="entry name" value="Rhodopsin"/>
    <property type="match status" value="1"/>
</dbReference>
<dbReference type="Gene3D" id="1.20.1070.10">
    <property type="entry name" value="Rhodopsin 7-helix transmembrane proteins"/>
    <property type="match status" value="1"/>
</dbReference>
<dbReference type="InterPro" id="IPR050125">
    <property type="entry name" value="GPCR_opsins"/>
</dbReference>
<dbReference type="InterPro" id="IPR000276">
    <property type="entry name" value="GPCR_Rhodpsn"/>
</dbReference>
<dbReference type="InterPro" id="IPR017452">
    <property type="entry name" value="GPCR_Rhodpsn_7TM"/>
</dbReference>
<dbReference type="InterPro" id="IPR001760">
    <property type="entry name" value="Opsin"/>
</dbReference>
<dbReference type="InterPro" id="IPR027430">
    <property type="entry name" value="Retinal_BS"/>
</dbReference>
<dbReference type="InterPro" id="IPR000732">
    <property type="entry name" value="Rhodopsin"/>
</dbReference>
<dbReference type="InterPro" id="IPR019477">
    <property type="entry name" value="Rhodopsin_N"/>
</dbReference>
<dbReference type="PANTHER" id="PTHR24240">
    <property type="entry name" value="OPSIN"/>
    <property type="match status" value="1"/>
</dbReference>
<dbReference type="Pfam" id="PF00001">
    <property type="entry name" value="7tm_1"/>
    <property type="match status" value="1"/>
</dbReference>
<dbReference type="Pfam" id="PF10413">
    <property type="entry name" value="Rhodopsin_N"/>
    <property type="match status" value="1"/>
</dbReference>
<dbReference type="PRINTS" id="PR00237">
    <property type="entry name" value="GPCRRHODOPSN"/>
</dbReference>
<dbReference type="PRINTS" id="PR00238">
    <property type="entry name" value="OPSIN"/>
</dbReference>
<dbReference type="PRINTS" id="PR00579">
    <property type="entry name" value="RHODOPSIN"/>
</dbReference>
<dbReference type="SUPFAM" id="SSF81321">
    <property type="entry name" value="Family A G protein-coupled receptor-like"/>
    <property type="match status" value="1"/>
</dbReference>
<dbReference type="PROSITE" id="PS00237">
    <property type="entry name" value="G_PROTEIN_RECEP_F1_1"/>
    <property type="match status" value="1"/>
</dbReference>
<dbReference type="PROSITE" id="PS50262">
    <property type="entry name" value="G_PROTEIN_RECEP_F1_2"/>
    <property type="match status" value="1"/>
</dbReference>
<dbReference type="PROSITE" id="PS00238">
    <property type="entry name" value="OPSIN"/>
    <property type="match status" value="1"/>
</dbReference>
<comment type="function">
    <text evidence="1 2">Photoreceptor required for image-forming vision at low light intensity. Required for photoreceptor cell viability after birth (By similarity). Light-induced isomerization of 11-cis to all-trans retinal triggers a conformational change that activates signaling via G-proteins. Subsequent receptor phosphorylation mediates displacement of the bound G-protein alpha subunit by arrestin and terminates signaling (By similarity).</text>
</comment>
<comment type="subcellular location">
    <subcellularLocation>
        <location evidence="2">Membrane</location>
        <topology evidence="2">Multi-pass membrane protein</topology>
    </subcellularLocation>
    <subcellularLocation>
        <location evidence="6">Cell projection</location>
        <location evidence="6">Cilium</location>
        <location evidence="6">Photoreceptor outer segment</location>
    </subcellularLocation>
    <text evidence="2">Synthesized in the inner segment (IS) of rod photoreceptor cells before vectorial transport to disk membranes in the rod outer segment (OS) photosensory cilia.</text>
</comment>
<comment type="tissue specificity">
    <text evidence="5 6">Detected in retina rod photoreceptor cell outer segments (at protein level) (PubMed:8400551). Detected in retina (PubMed:1426275).</text>
</comment>
<comment type="PTM">
    <text evidence="1">Contains one covalently linked retinal chromophore. Upon light absorption, the covalently bound 11-cis-retinal is converted to all-trans-retinal. After hydrolysis of the Schiff base and release of the covalently bound all-trans-retinal, active rhodopsin is regenerated by binding of a fresh molecule of 11-cis-retinal.</text>
</comment>
<comment type="similarity">
    <text evidence="3">Belongs to the G-protein coupled receptor 1 family. Opsin subfamily.</text>
</comment>
<keyword id="KW-0966">Cell projection</keyword>
<keyword id="KW-0157">Chromophore</keyword>
<keyword id="KW-1015">Disulfide bond</keyword>
<keyword id="KW-0297">G-protein coupled receptor</keyword>
<keyword id="KW-0325">Glycoprotein</keyword>
<keyword id="KW-0449">Lipoprotein</keyword>
<keyword id="KW-0472">Membrane</keyword>
<keyword id="KW-0564">Palmitate</keyword>
<keyword id="KW-0597">Phosphoprotein</keyword>
<keyword id="KW-0600">Photoreceptor protein</keyword>
<keyword id="KW-0675">Receptor</keyword>
<keyword id="KW-0681">Retinal protein</keyword>
<keyword id="KW-0716">Sensory transduction</keyword>
<keyword id="KW-0807">Transducer</keyword>
<keyword id="KW-0812">Transmembrane</keyword>
<keyword id="KW-1133">Transmembrane helix</keyword>
<keyword id="KW-0844">Vision</keyword>